<feature type="chain" id="PRO_0000150765" description="Olfactory receptor 52A1">
    <location>
        <begin position="1"/>
        <end position="312"/>
    </location>
</feature>
<feature type="topological domain" description="Extracellular" evidence="1">
    <location>
        <begin position="1"/>
        <end position="27"/>
    </location>
</feature>
<feature type="transmembrane region" description="Helical; Name=1" evidence="1">
    <location>
        <begin position="28"/>
        <end position="48"/>
    </location>
</feature>
<feature type="topological domain" description="Cytoplasmic" evidence="1">
    <location>
        <begin position="49"/>
        <end position="56"/>
    </location>
</feature>
<feature type="transmembrane region" description="Helical; Name=2" evidence="1">
    <location>
        <begin position="57"/>
        <end position="77"/>
    </location>
</feature>
<feature type="topological domain" description="Extracellular" evidence="1">
    <location>
        <begin position="78"/>
        <end position="101"/>
    </location>
</feature>
<feature type="transmembrane region" description="Helical; Name=3" evidence="1">
    <location>
        <begin position="102"/>
        <end position="122"/>
    </location>
</feature>
<feature type="topological domain" description="Cytoplasmic" evidence="1">
    <location>
        <begin position="123"/>
        <end position="141"/>
    </location>
</feature>
<feature type="transmembrane region" description="Helical; Name=4" evidence="1">
    <location>
        <begin position="142"/>
        <end position="162"/>
    </location>
</feature>
<feature type="topological domain" description="Extracellular" evidence="1">
    <location>
        <begin position="163"/>
        <end position="199"/>
    </location>
</feature>
<feature type="transmembrane region" description="Helical; Name=5" evidence="1">
    <location>
        <begin position="200"/>
        <end position="220"/>
    </location>
</feature>
<feature type="topological domain" description="Cytoplasmic" evidence="1">
    <location>
        <begin position="221"/>
        <end position="240"/>
    </location>
</feature>
<feature type="transmembrane region" description="Helical; Name=6" evidence="1">
    <location>
        <begin position="241"/>
        <end position="261"/>
    </location>
</feature>
<feature type="topological domain" description="Extracellular" evidence="1">
    <location>
        <begin position="262"/>
        <end position="276"/>
    </location>
</feature>
<feature type="transmembrane region" description="Helical; Name=7" evidence="1">
    <location>
        <begin position="277"/>
        <end position="297"/>
    </location>
</feature>
<feature type="topological domain" description="Cytoplasmic" evidence="1">
    <location>
        <begin position="298"/>
        <end position="312"/>
    </location>
</feature>
<feature type="glycosylation site" description="N-linked (GlcNAc...) asparagine" evidence="1">
    <location>
        <position position="5"/>
    </location>
</feature>
<feature type="disulfide bond" evidence="2">
    <location>
        <begin position="99"/>
        <end position="182"/>
    </location>
</feature>
<feature type="sequence conflict" description="In Ref. 1; AAD51279, 2; AAG42367 and 4; AAI11723." evidence="3" ref="1 2 4">
    <original>S</original>
    <variation>P</variation>
    <location>
        <position position="272"/>
    </location>
</feature>
<reference key="1">
    <citation type="journal article" date="1999" name="Genomics">
        <title>An olfactory receptor gene is located in the extended human beta-globin gene cluster and is expressed in erythroid cells.</title>
        <authorList>
            <person name="Feingold E.A."/>
            <person name="Penny L.A."/>
            <person name="Nienhuis A.W."/>
            <person name="Forget B.G."/>
        </authorList>
    </citation>
    <scope>NUCLEOTIDE SEQUENCE [GENOMIC DNA]</scope>
</reference>
<reference key="2">
    <citation type="journal article" date="2000" name="Proc. Natl. Acad. Sci. U.S.A.">
        <title>Comparative structural and functional analysis of the olfactory receptor genes flanking the human and mouse beta-globin gene clusters.</title>
        <authorList>
            <person name="Bulger M."/>
            <person name="Bender M.A."/>
            <person name="van Doorninck J.H."/>
            <person name="Wertman B."/>
            <person name="Farrell C.M."/>
            <person name="Felsenfeld G."/>
            <person name="Groudine M."/>
            <person name="Hardison R."/>
        </authorList>
    </citation>
    <scope>NUCLEOTIDE SEQUENCE [GENOMIC DNA]</scope>
</reference>
<reference key="3">
    <citation type="journal article" date="2006" name="Nature">
        <title>Human chromosome 11 DNA sequence and analysis including novel gene identification.</title>
        <authorList>
            <person name="Taylor T.D."/>
            <person name="Noguchi H."/>
            <person name="Totoki Y."/>
            <person name="Toyoda A."/>
            <person name="Kuroki Y."/>
            <person name="Dewar K."/>
            <person name="Lloyd C."/>
            <person name="Itoh T."/>
            <person name="Takeda T."/>
            <person name="Kim D.-W."/>
            <person name="She X."/>
            <person name="Barlow K.F."/>
            <person name="Bloom T."/>
            <person name="Bruford E."/>
            <person name="Chang J.L."/>
            <person name="Cuomo C.A."/>
            <person name="Eichler E."/>
            <person name="FitzGerald M.G."/>
            <person name="Jaffe D.B."/>
            <person name="LaButti K."/>
            <person name="Nicol R."/>
            <person name="Park H.-S."/>
            <person name="Seaman C."/>
            <person name="Sougnez C."/>
            <person name="Yang X."/>
            <person name="Zimmer A.R."/>
            <person name="Zody M.C."/>
            <person name="Birren B.W."/>
            <person name="Nusbaum C."/>
            <person name="Fujiyama A."/>
            <person name="Hattori M."/>
            <person name="Rogers J."/>
            <person name="Lander E.S."/>
            <person name="Sakaki Y."/>
        </authorList>
    </citation>
    <scope>NUCLEOTIDE SEQUENCE [LARGE SCALE GENOMIC DNA]</scope>
</reference>
<reference key="4">
    <citation type="journal article" date="2004" name="Genome Res.">
        <title>The status, quality, and expansion of the NIH full-length cDNA project: the Mammalian Gene Collection (MGC).</title>
        <authorList>
            <consortium name="The MGC Project Team"/>
        </authorList>
    </citation>
    <scope>NUCLEOTIDE SEQUENCE [LARGE SCALE MRNA]</scope>
</reference>
<reference key="5">
    <citation type="journal article" date="2004" name="Proc. Natl. Acad. Sci. U.S.A.">
        <title>The human olfactory receptor gene family.</title>
        <authorList>
            <person name="Malnic B."/>
            <person name="Godfrey P.A."/>
            <person name="Buck L.B."/>
        </authorList>
    </citation>
    <scope>IDENTIFICATION</scope>
</reference>
<reference key="6">
    <citation type="journal article" date="2004" name="Proc. Natl. Acad. Sci. U.S.A.">
        <authorList>
            <person name="Malnic B."/>
            <person name="Godfrey P.A."/>
            <person name="Buck L.B."/>
        </authorList>
    </citation>
    <scope>ERRATUM OF PUBMED:14983052</scope>
</reference>
<gene>
    <name type="primary">OR52A1</name>
</gene>
<sequence length="312" mass="35322">MSISNITVYMPSVLTLVGIPGLESVQCWIGIPFCAIYLIAMIGNSLLLSIIKSERSLHEPLYIFLGMLGATDIALASSIMPKMLGIFWFNVPEIYFDSCLLQMWFIHTLQGIESGILVAMALDRYVAICYPLRHANIFTHQLVIQIGTMVVLRAAILVAPCLVLIKCRFQFYHTTVISHSYCEHMAIVKLAAANVQVNKIYGLFVAFTVAGFDLTFITLSYIQIFITVFRLPQKEARFKAFNTCIAHICVFLQFYLLAFFSFFTHRFGSHISPYIHILFSSIYLLVPPFLNPLVYGAKTTQIRIHVVKMFCS</sequence>
<evidence type="ECO:0000255" key="1"/>
<evidence type="ECO:0000255" key="2">
    <source>
        <dbReference type="PROSITE-ProRule" id="PRU00521"/>
    </source>
</evidence>
<evidence type="ECO:0000305" key="3"/>
<keyword id="KW-1003">Cell membrane</keyword>
<keyword id="KW-1015">Disulfide bond</keyword>
<keyword id="KW-0297">G-protein coupled receptor</keyword>
<keyword id="KW-0325">Glycoprotein</keyword>
<keyword id="KW-0472">Membrane</keyword>
<keyword id="KW-0552">Olfaction</keyword>
<keyword id="KW-0675">Receptor</keyword>
<keyword id="KW-1185">Reference proteome</keyword>
<keyword id="KW-0716">Sensory transduction</keyword>
<keyword id="KW-0807">Transducer</keyword>
<keyword id="KW-0812">Transmembrane</keyword>
<keyword id="KW-1133">Transmembrane helix</keyword>
<accession>Q9UKL2</accession>
<accession>Q6IF31</accession>
<name>O52A1_HUMAN</name>
<comment type="function">
    <text evidence="3">Odorant receptor.</text>
</comment>
<comment type="subcellular location">
    <subcellularLocation>
        <location>Cell membrane</location>
        <topology>Multi-pass membrane protein</topology>
    </subcellularLocation>
</comment>
<comment type="similarity">
    <text evidence="2">Belongs to the G-protein coupled receptor 1 family.</text>
</comment>
<comment type="online information" name="Human Olfactory Receptor Data Exploratorium (HORDE)">
    <link uri="http://genome.weizmann.ac.il/horde/card/index/symbol:OR52A1"/>
</comment>
<proteinExistence type="evidence at transcript level"/>
<organism>
    <name type="scientific">Homo sapiens</name>
    <name type="common">Human</name>
    <dbReference type="NCBI Taxonomy" id="9606"/>
    <lineage>
        <taxon>Eukaryota</taxon>
        <taxon>Metazoa</taxon>
        <taxon>Chordata</taxon>
        <taxon>Craniata</taxon>
        <taxon>Vertebrata</taxon>
        <taxon>Euteleostomi</taxon>
        <taxon>Mammalia</taxon>
        <taxon>Eutheria</taxon>
        <taxon>Euarchontoglires</taxon>
        <taxon>Primates</taxon>
        <taxon>Haplorrhini</taxon>
        <taxon>Catarrhini</taxon>
        <taxon>Hominidae</taxon>
        <taxon>Homo</taxon>
    </lineage>
</organism>
<dbReference type="EMBL" id="AF154673">
    <property type="protein sequence ID" value="AAD51279.1"/>
    <property type="molecule type" value="Genomic_DNA"/>
</dbReference>
<dbReference type="EMBL" id="AF289204">
    <property type="protein sequence ID" value="AAG42367.1"/>
    <property type="molecule type" value="Genomic_DNA"/>
</dbReference>
<dbReference type="EMBL" id="AC129505">
    <property type="status" value="NOT_ANNOTATED_CDS"/>
    <property type="molecule type" value="Genomic_DNA"/>
</dbReference>
<dbReference type="EMBL" id="BC111722">
    <property type="protein sequence ID" value="AAI11723.1"/>
    <property type="molecule type" value="mRNA"/>
</dbReference>
<dbReference type="EMBL" id="BK004431">
    <property type="protein sequence ID" value="DAA04829.1"/>
    <property type="molecule type" value="Genomic_DNA"/>
</dbReference>
<dbReference type="CCDS" id="CCDS31374.1"/>
<dbReference type="RefSeq" id="NP_036507.2">
    <property type="nucleotide sequence ID" value="NM_012375.3"/>
</dbReference>
<dbReference type="SMR" id="Q9UKL2"/>
<dbReference type="FunCoup" id="Q9UKL2">
    <property type="interactions" value="464"/>
</dbReference>
<dbReference type="STRING" id="9606.ENSP00000369725"/>
<dbReference type="GlyCosmos" id="Q9UKL2">
    <property type="glycosylation" value="1 site, No reported glycans"/>
</dbReference>
<dbReference type="GlyGen" id="Q9UKL2">
    <property type="glycosylation" value="1 site"/>
</dbReference>
<dbReference type="BioMuta" id="OR52A1"/>
<dbReference type="DMDM" id="296439247"/>
<dbReference type="PaxDb" id="9606-ENSP00000369725"/>
<dbReference type="Antibodypedia" id="55354">
    <property type="antibodies" value="107 antibodies from 21 providers"/>
</dbReference>
<dbReference type="DNASU" id="23538"/>
<dbReference type="Ensembl" id="ENST00000380367.3">
    <property type="protein sequence ID" value="ENSP00000369725.1"/>
    <property type="gene ID" value="ENSG00000182070.7"/>
</dbReference>
<dbReference type="GeneID" id="23538"/>
<dbReference type="KEGG" id="hsa:23538"/>
<dbReference type="MANE-Select" id="ENST00000380367.3">
    <property type="protein sequence ID" value="ENSP00000369725.1"/>
    <property type="RefSeq nucleotide sequence ID" value="NM_012375.3"/>
    <property type="RefSeq protein sequence ID" value="NP_036507.2"/>
</dbReference>
<dbReference type="UCSC" id="uc010qyy.2">
    <property type="organism name" value="human"/>
</dbReference>
<dbReference type="AGR" id="HGNC:8318"/>
<dbReference type="CTD" id="23538"/>
<dbReference type="DisGeNET" id="23538"/>
<dbReference type="GeneCards" id="OR52A1"/>
<dbReference type="HGNC" id="HGNC:8318">
    <property type="gene designation" value="OR52A1"/>
</dbReference>
<dbReference type="HPA" id="ENSG00000182070">
    <property type="expression patterns" value="Not detected"/>
</dbReference>
<dbReference type="neXtProt" id="NX_Q9UKL2"/>
<dbReference type="OpenTargets" id="ENSG00000182070"/>
<dbReference type="PharmGKB" id="PA32392"/>
<dbReference type="VEuPathDB" id="HostDB:ENSG00000182070"/>
<dbReference type="eggNOG" id="ENOG502SITM">
    <property type="taxonomic scope" value="Eukaryota"/>
</dbReference>
<dbReference type="GeneTree" id="ENSGT01130000278289"/>
<dbReference type="HOGENOM" id="CLU_012526_0_0_1"/>
<dbReference type="InParanoid" id="Q9UKL2"/>
<dbReference type="OMA" id="HTFQGME"/>
<dbReference type="OrthoDB" id="5969463at2759"/>
<dbReference type="PAN-GO" id="Q9UKL2">
    <property type="GO annotations" value="0 GO annotations based on evolutionary models"/>
</dbReference>
<dbReference type="PhylomeDB" id="Q9UKL2"/>
<dbReference type="TreeFam" id="TF352744"/>
<dbReference type="PathwayCommons" id="Q9UKL2"/>
<dbReference type="Reactome" id="R-HSA-9752946">
    <property type="pathway name" value="Expression and translocation of olfactory receptors"/>
</dbReference>
<dbReference type="BioGRID-ORCS" id="23538">
    <property type="hits" value="7 hits in 751 CRISPR screens"/>
</dbReference>
<dbReference type="GeneWiki" id="OR52A1"/>
<dbReference type="GenomeRNAi" id="23538"/>
<dbReference type="Pharos" id="Q9UKL2">
    <property type="development level" value="Tdark"/>
</dbReference>
<dbReference type="PRO" id="PR:Q9UKL2"/>
<dbReference type="Proteomes" id="UP000005640">
    <property type="component" value="Chromosome 11"/>
</dbReference>
<dbReference type="RNAct" id="Q9UKL2">
    <property type="molecule type" value="protein"/>
</dbReference>
<dbReference type="Bgee" id="ENSG00000182070">
    <property type="expression patterns" value="Expressed in male germ line stem cell (sensu Vertebrata) in testis and 1 other cell type or tissue"/>
</dbReference>
<dbReference type="GO" id="GO:0005886">
    <property type="term" value="C:plasma membrane"/>
    <property type="evidence" value="ECO:0000318"/>
    <property type="project" value="GO_Central"/>
</dbReference>
<dbReference type="GO" id="GO:0004930">
    <property type="term" value="F:G protein-coupled receptor activity"/>
    <property type="evidence" value="ECO:0007669"/>
    <property type="project" value="UniProtKB-KW"/>
</dbReference>
<dbReference type="GO" id="GO:0004984">
    <property type="term" value="F:olfactory receptor activity"/>
    <property type="evidence" value="ECO:0000318"/>
    <property type="project" value="GO_Central"/>
</dbReference>
<dbReference type="GO" id="GO:0004888">
    <property type="term" value="F:transmembrane signaling receptor activity"/>
    <property type="evidence" value="ECO:0000304"/>
    <property type="project" value="ProtInc"/>
</dbReference>
<dbReference type="GO" id="GO:0007608">
    <property type="term" value="P:sensory perception of smell"/>
    <property type="evidence" value="ECO:0000304"/>
    <property type="project" value="ProtInc"/>
</dbReference>
<dbReference type="GO" id="GO:0007165">
    <property type="term" value="P:signal transduction"/>
    <property type="evidence" value="ECO:0000304"/>
    <property type="project" value="ProtInc"/>
</dbReference>
<dbReference type="FunFam" id="1.20.1070.10:FF:000006">
    <property type="entry name" value="Olfactory receptor"/>
    <property type="match status" value="1"/>
</dbReference>
<dbReference type="Gene3D" id="1.20.1070.10">
    <property type="entry name" value="Rhodopsin 7-helix transmembrane proteins"/>
    <property type="match status" value="1"/>
</dbReference>
<dbReference type="InterPro" id="IPR000276">
    <property type="entry name" value="GPCR_Rhodpsn"/>
</dbReference>
<dbReference type="InterPro" id="IPR017452">
    <property type="entry name" value="GPCR_Rhodpsn_7TM"/>
</dbReference>
<dbReference type="InterPro" id="IPR000725">
    <property type="entry name" value="Olfact_rcpt"/>
</dbReference>
<dbReference type="InterPro" id="IPR050402">
    <property type="entry name" value="OR51/52/56-like"/>
</dbReference>
<dbReference type="PANTHER" id="PTHR26450:SF98">
    <property type="entry name" value="OLFACTORY RECEPTOR 52A1"/>
    <property type="match status" value="1"/>
</dbReference>
<dbReference type="PANTHER" id="PTHR26450">
    <property type="entry name" value="OLFACTORY RECEPTOR 56B1-RELATED"/>
    <property type="match status" value="1"/>
</dbReference>
<dbReference type="Pfam" id="PF13853">
    <property type="entry name" value="7tm_4"/>
    <property type="match status" value="1"/>
</dbReference>
<dbReference type="PRINTS" id="PR00237">
    <property type="entry name" value="GPCRRHODOPSN"/>
</dbReference>
<dbReference type="PRINTS" id="PR00245">
    <property type="entry name" value="OLFACTORYR"/>
</dbReference>
<dbReference type="SUPFAM" id="SSF81321">
    <property type="entry name" value="Family A G protein-coupled receptor-like"/>
    <property type="match status" value="1"/>
</dbReference>
<dbReference type="PROSITE" id="PS00237">
    <property type="entry name" value="G_PROTEIN_RECEP_F1_1"/>
    <property type="match status" value="1"/>
</dbReference>
<dbReference type="PROSITE" id="PS50262">
    <property type="entry name" value="G_PROTEIN_RECEP_F1_2"/>
    <property type="match status" value="1"/>
</dbReference>
<protein>
    <recommendedName>
        <fullName>Olfactory receptor 52A1</fullName>
    </recommendedName>
    <alternativeName>
        <fullName>HPFH1OR</fullName>
    </alternativeName>
    <alternativeName>
        <fullName>Odorant receptor HOR3'beta4</fullName>
    </alternativeName>
    <alternativeName>
        <fullName>Olfactory receptor OR11-319</fullName>
    </alternativeName>
</protein>